<sequence>MFPIECHTLQTSFKQVLSLVAEKITTKAFVIFSVLFSLIIGFIASCGFLFAGPPAFIASGLCFALLVSVVSFFGCQKLIPYGIQHLMSYVKSIPSLSSSLIDFLKTESKSISSLYPNPGLKECFKGASPKYKKFFFDHPEKLLSAAFTDWTPQIIPSDSGQPRTIILSHSSLPFSLTLSTLDFETLHTHLIKSNALTCRVGYAHQLPSGNPVMREAKEGVLQQHYDTGNETFFISIQESKQLQQEELFKKLFSHYAQITEHNLSNEILLLEPLKTPLHTPKARTLELLALFCALEQLRYTKVADWRTKKLAPIFPLDYEDFFTLFMKKQHYTLPGNVSNMRILSPVRPVSETALTTIIISGLEEEDKLGLLGQVQPFLFDAEEAHPQRGESILIQNVLDDITQ</sequence>
<proteinExistence type="inferred from homology"/>
<evidence type="ECO:0000255" key="1"/>
<evidence type="ECO:0000305" key="2"/>
<keyword id="KW-1003">Cell membrane</keyword>
<keyword id="KW-0472">Membrane</keyword>
<keyword id="KW-1185">Reference proteome</keyword>
<keyword id="KW-0812">Transmembrane</keyword>
<keyword id="KW-1133">Transmembrane helix</keyword>
<comment type="subcellular location">
    <subcellularLocation>
        <location evidence="2">Cell membrane</location>
        <topology evidence="2">Multi-pass membrane protein</topology>
    </subcellularLocation>
</comment>
<comment type="similarity">
    <text evidence="2">Belongs to the chlamydial CPn_0129/CT_036/TC_0306 family.</text>
</comment>
<dbReference type="EMBL" id="AE001273">
    <property type="protein sequence ID" value="AAC67626.1"/>
    <property type="molecule type" value="Genomic_DNA"/>
</dbReference>
<dbReference type="PIR" id="G71564">
    <property type="entry name" value="G71564"/>
</dbReference>
<dbReference type="RefSeq" id="NP_219538.1">
    <property type="nucleotide sequence ID" value="NC_000117.1"/>
</dbReference>
<dbReference type="RefSeq" id="WP_010724994.1">
    <property type="nucleotide sequence ID" value="NC_000117.1"/>
</dbReference>
<dbReference type="IntAct" id="O84039">
    <property type="interactions" value="1"/>
</dbReference>
<dbReference type="MINT" id="O84039"/>
<dbReference type="STRING" id="272561.CT_036"/>
<dbReference type="EnsemblBacteria" id="AAC67626">
    <property type="protein sequence ID" value="AAC67626"/>
    <property type="gene ID" value="CT_036"/>
</dbReference>
<dbReference type="GeneID" id="884200"/>
<dbReference type="KEGG" id="ctr:CT_036"/>
<dbReference type="PATRIC" id="fig|272561.5.peg.41"/>
<dbReference type="HOGENOM" id="CLU_717080_0_0_0"/>
<dbReference type="InParanoid" id="O84039"/>
<dbReference type="OrthoDB" id="19106at2"/>
<dbReference type="Proteomes" id="UP000000431">
    <property type="component" value="Chromosome"/>
</dbReference>
<dbReference type="GO" id="GO:0005886">
    <property type="term" value="C:plasma membrane"/>
    <property type="evidence" value="ECO:0007669"/>
    <property type="project" value="UniProtKB-SubCell"/>
</dbReference>
<protein>
    <recommendedName>
        <fullName>Uncharacterized protein CT_036</fullName>
    </recommendedName>
</protein>
<accession>O84039</accession>
<reference key="1">
    <citation type="journal article" date="1998" name="Science">
        <title>Genome sequence of an obligate intracellular pathogen of humans: Chlamydia trachomatis.</title>
        <authorList>
            <person name="Stephens R.S."/>
            <person name="Kalman S."/>
            <person name="Lammel C.J."/>
            <person name="Fan J."/>
            <person name="Marathe R."/>
            <person name="Aravind L."/>
            <person name="Mitchell W.P."/>
            <person name="Olinger L."/>
            <person name="Tatusov R.L."/>
            <person name="Zhao Q."/>
            <person name="Koonin E.V."/>
            <person name="Davis R.W."/>
        </authorList>
    </citation>
    <scope>NUCLEOTIDE SEQUENCE [LARGE SCALE GENOMIC DNA]</scope>
    <source>
        <strain>ATCC VR-885 / DSM 19411 / UW-3/Cx</strain>
    </source>
</reference>
<name>Y036_CHLTR</name>
<gene>
    <name type="ordered locus">CT_036</name>
</gene>
<organism>
    <name type="scientific">Chlamydia trachomatis serovar D (strain ATCC VR-885 / DSM 19411 / UW-3/Cx)</name>
    <dbReference type="NCBI Taxonomy" id="272561"/>
    <lineage>
        <taxon>Bacteria</taxon>
        <taxon>Pseudomonadati</taxon>
        <taxon>Chlamydiota</taxon>
        <taxon>Chlamydiia</taxon>
        <taxon>Chlamydiales</taxon>
        <taxon>Chlamydiaceae</taxon>
        <taxon>Chlamydia/Chlamydophila group</taxon>
        <taxon>Chlamydia</taxon>
    </lineage>
</organism>
<feature type="chain" id="PRO_0000218365" description="Uncharacterized protein CT_036">
    <location>
        <begin position="1"/>
        <end position="403"/>
    </location>
</feature>
<feature type="transmembrane region" description="Helical" evidence="1">
    <location>
        <begin position="29"/>
        <end position="49"/>
    </location>
</feature>
<feature type="transmembrane region" description="Helical" evidence="1">
    <location>
        <begin position="55"/>
        <end position="75"/>
    </location>
</feature>